<evidence type="ECO:0000255" key="1">
    <source>
        <dbReference type="HAMAP-Rule" id="MF_01633"/>
    </source>
</evidence>
<name>QUEC_METMA</name>
<accession>Q8PYU8</accession>
<reference key="1">
    <citation type="journal article" date="2002" name="J. Mol. Microbiol. Biotechnol.">
        <title>The genome of Methanosarcina mazei: evidence for lateral gene transfer between Bacteria and Archaea.</title>
        <authorList>
            <person name="Deppenmeier U."/>
            <person name="Johann A."/>
            <person name="Hartsch T."/>
            <person name="Merkl R."/>
            <person name="Schmitz R.A."/>
            <person name="Martinez-Arias R."/>
            <person name="Henne A."/>
            <person name="Wiezer A."/>
            <person name="Baeumer S."/>
            <person name="Jacobi C."/>
            <person name="Brueggemann H."/>
            <person name="Lienard T."/>
            <person name="Christmann A."/>
            <person name="Boemecke M."/>
            <person name="Steckel S."/>
            <person name="Bhattacharyya A."/>
            <person name="Lykidis A."/>
            <person name="Overbeek R."/>
            <person name="Klenk H.-P."/>
            <person name="Gunsalus R.P."/>
            <person name="Fritz H.-J."/>
            <person name="Gottschalk G."/>
        </authorList>
    </citation>
    <scope>NUCLEOTIDE SEQUENCE [LARGE SCALE GENOMIC DNA]</scope>
    <source>
        <strain>ATCC BAA-159 / DSM 3647 / Goe1 / Go1 / JCM 11833 / OCM 88</strain>
    </source>
</reference>
<protein>
    <recommendedName>
        <fullName evidence="1">7-cyano-7-deazaguanine synthase</fullName>
        <ecNumber evidence="1">6.3.4.20</ecNumber>
    </recommendedName>
    <alternativeName>
        <fullName evidence="1">7-cyano-7-carbaguanine synthase</fullName>
    </alternativeName>
    <alternativeName>
        <fullName evidence="1">Archaeosine biosynthesis protein QueC</fullName>
    </alternativeName>
    <alternativeName>
        <fullName evidence="1">PreQ(0) synthase</fullName>
    </alternativeName>
</protein>
<organism>
    <name type="scientific">Methanosarcina mazei (strain ATCC BAA-159 / DSM 3647 / Goe1 / Go1 / JCM 11833 / OCM 88)</name>
    <name type="common">Methanosarcina frisia</name>
    <dbReference type="NCBI Taxonomy" id="192952"/>
    <lineage>
        <taxon>Archaea</taxon>
        <taxon>Methanobacteriati</taxon>
        <taxon>Methanobacteriota</taxon>
        <taxon>Stenosarchaea group</taxon>
        <taxon>Methanomicrobia</taxon>
        <taxon>Methanosarcinales</taxon>
        <taxon>Methanosarcinaceae</taxon>
        <taxon>Methanosarcina</taxon>
    </lineage>
</organism>
<gene>
    <name evidence="1" type="primary">queC</name>
    <name type="ordered locus">MM_0753</name>
</gene>
<sequence>MKAITLLSSGLDSVAALAIAAESLEIEMAITFDYGQRAGQREMEYSEKVCEHFGIEQRIIKLDWLGEITHTSLVNRDEEVPSLSFEDIDENSPSMITEYSAKAVWVPNRNGVMLNIAGSFAESRGCDYIVVGFNGEEAGTFPDNSRDYIQAVDNAFSYSTQNGVKVLAPLAEMGKTEIVKKALEAEAPLEYSWSCYHGGEIPCGKCESCVRRARAFKNIGIKDPLLERLGI</sequence>
<keyword id="KW-0067">ATP-binding</keyword>
<keyword id="KW-0436">Ligase</keyword>
<keyword id="KW-0479">Metal-binding</keyword>
<keyword id="KW-0547">Nucleotide-binding</keyword>
<keyword id="KW-0862">Zinc</keyword>
<feature type="chain" id="PRO_0000246980" description="7-cyano-7-deazaguanine synthase">
    <location>
        <begin position="1"/>
        <end position="231"/>
    </location>
</feature>
<feature type="binding site" evidence="1">
    <location>
        <begin position="7"/>
        <end position="17"/>
    </location>
    <ligand>
        <name>ATP</name>
        <dbReference type="ChEBI" id="CHEBI:30616"/>
    </ligand>
</feature>
<feature type="binding site" evidence="1">
    <location>
        <position position="195"/>
    </location>
    <ligand>
        <name>Zn(2+)</name>
        <dbReference type="ChEBI" id="CHEBI:29105"/>
    </ligand>
</feature>
<feature type="binding site" evidence="1">
    <location>
        <position position="203"/>
    </location>
    <ligand>
        <name>Zn(2+)</name>
        <dbReference type="ChEBI" id="CHEBI:29105"/>
    </ligand>
</feature>
<feature type="binding site" evidence="1">
    <location>
        <position position="206"/>
    </location>
    <ligand>
        <name>Zn(2+)</name>
        <dbReference type="ChEBI" id="CHEBI:29105"/>
    </ligand>
</feature>
<feature type="binding site" evidence="1">
    <location>
        <position position="209"/>
    </location>
    <ligand>
        <name>Zn(2+)</name>
        <dbReference type="ChEBI" id="CHEBI:29105"/>
    </ligand>
</feature>
<proteinExistence type="inferred from homology"/>
<dbReference type="EC" id="6.3.4.20" evidence="1"/>
<dbReference type="EMBL" id="AE008384">
    <property type="protein sequence ID" value="AAM30449.1"/>
    <property type="molecule type" value="Genomic_DNA"/>
</dbReference>
<dbReference type="RefSeq" id="WP_011032704.1">
    <property type="nucleotide sequence ID" value="NC_003901.1"/>
</dbReference>
<dbReference type="SMR" id="Q8PYU8"/>
<dbReference type="GeneID" id="82159773"/>
<dbReference type="KEGG" id="mma:MM_0753"/>
<dbReference type="PATRIC" id="fig|192952.21.peg.895"/>
<dbReference type="eggNOG" id="arCOG00039">
    <property type="taxonomic scope" value="Archaea"/>
</dbReference>
<dbReference type="HOGENOM" id="CLU_081854_1_0_2"/>
<dbReference type="UniPathway" id="UPA00391"/>
<dbReference type="Proteomes" id="UP000000595">
    <property type="component" value="Chromosome"/>
</dbReference>
<dbReference type="GO" id="GO:0005524">
    <property type="term" value="F:ATP binding"/>
    <property type="evidence" value="ECO:0007669"/>
    <property type="project" value="UniProtKB-UniRule"/>
</dbReference>
<dbReference type="GO" id="GO:0016879">
    <property type="term" value="F:ligase activity, forming carbon-nitrogen bonds"/>
    <property type="evidence" value="ECO:0007669"/>
    <property type="project" value="UniProtKB-UniRule"/>
</dbReference>
<dbReference type="GO" id="GO:0008270">
    <property type="term" value="F:zinc ion binding"/>
    <property type="evidence" value="ECO:0007669"/>
    <property type="project" value="UniProtKB-UniRule"/>
</dbReference>
<dbReference type="CDD" id="cd01995">
    <property type="entry name" value="QueC-like"/>
    <property type="match status" value="1"/>
</dbReference>
<dbReference type="Gene3D" id="3.40.50.620">
    <property type="entry name" value="HUPs"/>
    <property type="match status" value="1"/>
</dbReference>
<dbReference type="HAMAP" id="MF_01633">
    <property type="entry name" value="QueC"/>
    <property type="match status" value="1"/>
</dbReference>
<dbReference type="InterPro" id="IPR018317">
    <property type="entry name" value="QueC"/>
</dbReference>
<dbReference type="InterPro" id="IPR014729">
    <property type="entry name" value="Rossmann-like_a/b/a_fold"/>
</dbReference>
<dbReference type="NCBIfam" id="TIGR00364">
    <property type="entry name" value="7-cyano-7-deazaguanine synthase QueC"/>
    <property type="match status" value="1"/>
</dbReference>
<dbReference type="PANTHER" id="PTHR42914">
    <property type="entry name" value="7-CYANO-7-DEAZAGUANINE SYNTHASE"/>
    <property type="match status" value="1"/>
</dbReference>
<dbReference type="PANTHER" id="PTHR42914:SF1">
    <property type="entry name" value="7-CYANO-7-DEAZAGUANINE SYNTHASE"/>
    <property type="match status" value="1"/>
</dbReference>
<dbReference type="Pfam" id="PF06508">
    <property type="entry name" value="QueC"/>
    <property type="match status" value="1"/>
</dbReference>
<dbReference type="PIRSF" id="PIRSF006293">
    <property type="entry name" value="ExsB"/>
    <property type="match status" value="1"/>
</dbReference>
<dbReference type="SUPFAM" id="SSF52402">
    <property type="entry name" value="Adenine nucleotide alpha hydrolases-like"/>
    <property type="match status" value="1"/>
</dbReference>
<comment type="function">
    <text evidence="1">Catalyzes the ATP-dependent conversion of 7-carboxy-7-deazaguanine (CDG) to 7-cyano-7-deazaguanine (preQ(0)).</text>
</comment>
<comment type="catalytic activity">
    <reaction evidence="1">
        <text>7-carboxy-7-deazaguanine + NH4(+) + ATP = 7-cyano-7-deazaguanine + ADP + phosphate + H2O + H(+)</text>
        <dbReference type="Rhea" id="RHEA:27982"/>
        <dbReference type="ChEBI" id="CHEBI:15377"/>
        <dbReference type="ChEBI" id="CHEBI:15378"/>
        <dbReference type="ChEBI" id="CHEBI:28938"/>
        <dbReference type="ChEBI" id="CHEBI:30616"/>
        <dbReference type="ChEBI" id="CHEBI:43474"/>
        <dbReference type="ChEBI" id="CHEBI:45075"/>
        <dbReference type="ChEBI" id="CHEBI:61036"/>
        <dbReference type="ChEBI" id="CHEBI:456216"/>
        <dbReference type="EC" id="6.3.4.20"/>
    </reaction>
</comment>
<comment type="cofactor">
    <cofactor evidence="1">
        <name>Zn(2+)</name>
        <dbReference type="ChEBI" id="CHEBI:29105"/>
    </cofactor>
    <text evidence="1">Binds 1 zinc ion per subunit.</text>
</comment>
<comment type="pathway">
    <text evidence="1">Purine metabolism; 7-cyano-7-deazaguanine biosynthesis.</text>
</comment>
<comment type="similarity">
    <text evidence="1">Belongs to the QueC family.</text>
</comment>